<keyword id="KW-0963">Cytoplasm</keyword>
<keyword id="KW-0312">Gluconeogenesis</keyword>
<keyword id="KW-0324">Glycolysis</keyword>
<keyword id="KW-0413">Isomerase</keyword>
<name>TPIS_STRPB</name>
<dbReference type="EC" id="5.3.1.1" evidence="1"/>
<dbReference type="EMBL" id="CP000261">
    <property type="protein sequence ID" value="ABF35573.1"/>
    <property type="molecule type" value="Genomic_DNA"/>
</dbReference>
<dbReference type="SMR" id="Q1JCT5"/>
<dbReference type="KEGG" id="spj:MGAS2096_Spy0521"/>
<dbReference type="HOGENOM" id="CLU_024251_2_3_9"/>
<dbReference type="UniPathway" id="UPA00109">
    <property type="reaction ID" value="UER00189"/>
</dbReference>
<dbReference type="UniPathway" id="UPA00138"/>
<dbReference type="GO" id="GO:0005829">
    <property type="term" value="C:cytosol"/>
    <property type="evidence" value="ECO:0007669"/>
    <property type="project" value="TreeGrafter"/>
</dbReference>
<dbReference type="GO" id="GO:0004807">
    <property type="term" value="F:triose-phosphate isomerase activity"/>
    <property type="evidence" value="ECO:0007669"/>
    <property type="project" value="UniProtKB-UniRule"/>
</dbReference>
<dbReference type="GO" id="GO:0006094">
    <property type="term" value="P:gluconeogenesis"/>
    <property type="evidence" value="ECO:0007669"/>
    <property type="project" value="UniProtKB-UniRule"/>
</dbReference>
<dbReference type="GO" id="GO:0046166">
    <property type="term" value="P:glyceraldehyde-3-phosphate biosynthetic process"/>
    <property type="evidence" value="ECO:0007669"/>
    <property type="project" value="TreeGrafter"/>
</dbReference>
<dbReference type="GO" id="GO:0019563">
    <property type="term" value="P:glycerol catabolic process"/>
    <property type="evidence" value="ECO:0007669"/>
    <property type="project" value="TreeGrafter"/>
</dbReference>
<dbReference type="GO" id="GO:0006096">
    <property type="term" value="P:glycolytic process"/>
    <property type="evidence" value="ECO:0007669"/>
    <property type="project" value="UniProtKB-UniRule"/>
</dbReference>
<dbReference type="CDD" id="cd00311">
    <property type="entry name" value="TIM"/>
    <property type="match status" value="1"/>
</dbReference>
<dbReference type="FunFam" id="3.20.20.70:FF:000016">
    <property type="entry name" value="Triosephosphate isomerase"/>
    <property type="match status" value="1"/>
</dbReference>
<dbReference type="Gene3D" id="3.20.20.70">
    <property type="entry name" value="Aldolase class I"/>
    <property type="match status" value="1"/>
</dbReference>
<dbReference type="HAMAP" id="MF_00147_B">
    <property type="entry name" value="TIM_B"/>
    <property type="match status" value="1"/>
</dbReference>
<dbReference type="InterPro" id="IPR013785">
    <property type="entry name" value="Aldolase_TIM"/>
</dbReference>
<dbReference type="InterPro" id="IPR035990">
    <property type="entry name" value="TIM_sf"/>
</dbReference>
<dbReference type="InterPro" id="IPR022896">
    <property type="entry name" value="TrioseP_Isoase_bac/euk"/>
</dbReference>
<dbReference type="InterPro" id="IPR000652">
    <property type="entry name" value="Triosephosphate_isomerase"/>
</dbReference>
<dbReference type="InterPro" id="IPR020861">
    <property type="entry name" value="Triosephosphate_isomerase_AS"/>
</dbReference>
<dbReference type="NCBIfam" id="TIGR00419">
    <property type="entry name" value="tim"/>
    <property type="match status" value="1"/>
</dbReference>
<dbReference type="PANTHER" id="PTHR21139">
    <property type="entry name" value="TRIOSEPHOSPHATE ISOMERASE"/>
    <property type="match status" value="1"/>
</dbReference>
<dbReference type="PANTHER" id="PTHR21139:SF42">
    <property type="entry name" value="TRIOSEPHOSPHATE ISOMERASE"/>
    <property type="match status" value="1"/>
</dbReference>
<dbReference type="Pfam" id="PF00121">
    <property type="entry name" value="TIM"/>
    <property type="match status" value="1"/>
</dbReference>
<dbReference type="SUPFAM" id="SSF51351">
    <property type="entry name" value="Triosephosphate isomerase (TIM)"/>
    <property type="match status" value="1"/>
</dbReference>
<dbReference type="PROSITE" id="PS00171">
    <property type="entry name" value="TIM_1"/>
    <property type="match status" value="1"/>
</dbReference>
<dbReference type="PROSITE" id="PS51440">
    <property type="entry name" value="TIM_2"/>
    <property type="match status" value="1"/>
</dbReference>
<comment type="function">
    <text evidence="1">Involved in the gluconeogenesis. Catalyzes stereospecifically the conversion of dihydroxyacetone phosphate (DHAP) to D-glyceraldehyde-3-phosphate (G3P).</text>
</comment>
<comment type="catalytic activity">
    <reaction evidence="1">
        <text>D-glyceraldehyde 3-phosphate = dihydroxyacetone phosphate</text>
        <dbReference type="Rhea" id="RHEA:18585"/>
        <dbReference type="ChEBI" id="CHEBI:57642"/>
        <dbReference type="ChEBI" id="CHEBI:59776"/>
        <dbReference type="EC" id="5.3.1.1"/>
    </reaction>
</comment>
<comment type="pathway">
    <text evidence="1">Carbohydrate biosynthesis; gluconeogenesis.</text>
</comment>
<comment type="pathway">
    <text evidence="1">Carbohydrate degradation; glycolysis; D-glyceraldehyde 3-phosphate from glycerone phosphate: step 1/1.</text>
</comment>
<comment type="subunit">
    <text evidence="1">Homodimer.</text>
</comment>
<comment type="subcellular location">
    <subcellularLocation>
        <location evidence="1">Cytoplasm</location>
    </subcellularLocation>
</comment>
<comment type="similarity">
    <text evidence="1">Belongs to the triosephosphate isomerase family.</text>
</comment>
<feature type="chain" id="PRO_0000307573" description="Triosephosphate isomerase">
    <location>
        <begin position="1"/>
        <end position="252"/>
    </location>
</feature>
<feature type="active site" description="Electrophile" evidence="1">
    <location>
        <position position="96"/>
    </location>
</feature>
<feature type="active site" description="Proton acceptor" evidence="1">
    <location>
        <position position="168"/>
    </location>
</feature>
<feature type="binding site" evidence="1">
    <location>
        <begin position="10"/>
        <end position="12"/>
    </location>
    <ligand>
        <name>substrate</name>
    </ligand>
</feature>
<feature type="binding site" evidence="1">
    <location>
        <position position="174"/>
    </location>
    <ligand>
        <name>substrate</name>
    </ligand>
</feature>
<feature type="binding site" evidence="1">
    <location>
        <position position="214"/>
    </location>
    <ligand>
        <name>substrate</name>
    </ligand>
</feature>
<feature type="binding site" evidence="1">
    <location>
        <begin position="235"/>
        <end position="236"/>
    </location>
    <ligand>
        <name>substrate</name>
    </ligand>
</feature>
<organism>
    <name type="scientific">Streptococcus pyogenes serotype M12 (strain MGAS2096)</name>
    <dbReference type="NCBI Taxonomy" id="370553"/>
    <lineage>
        <taxon>Bacteria</taxon>
        <taxon>Bacillati</taxon>
        <taxon>Bacillota</taxon>
        <taxon>Bacilli</taxon>
        <taxon>Lactobacillales</taxon>
        <taxon>Streptococcaceae</taxon>
        <taxon>Streptococcus</taxon>
    </lineage>
</organism>
<reference key="1">
    <citation type="journal article" date="2006" name="Proc. Natl. Acad. Sci. U.S.A.">
        <title>Molecular genetic anatomy of inter- and intraserotype variation in the human bacterial pathogen group A Streptococcus.</title>
        <authorList>
            <person name="Beres S.B."/>
            <person name="Richter E.W."/>
            <person name="Nagiec M.J."/>
            <person name="Sumby P."/>
            <person name="Porcella S.F."/>
            <person name="DeLeo F.R."/>
            <person name="Musser J.M."/>
        </authorList>
    </citation>
    <scope>NUCLEOTIDE SEQUENCE [LARGE SCALE GENOMIC DNA]</scope>
    <source>
        <strain>MGAS2096</strain>
    </source>
</reference>
<proteinExistence type="inferred from homology"/>
<evidence type="ECO:0000255" key="1">
    <source>
        <dbReference type="HAMAP-Rule" id="MF_00147"/>
    </source>
</evidence>
<gene>
    <name evidence="1" type="primary">tpiA</name>
    <name type="ordered locus">MGAS2096_Spy0521</name>
</gene>
<sequence length="252" mass="26618">MSRKPIIAGNWKMNKNPQEAKAFVEAVASKLPSTDLVDVAVAAPAVDLVTTIEAAKDSVLKVAAQNCYFENTGAFTGETSPKVLAEMGADYVVIGHSERRDYFHETDEDINKKAKAIFANGLTPIVCCGESLETYEAGKAVEFVGAQVSAALAGLSAEQVASLVLAYEPIWAIGTGKSATQDDAQNMCKAVRDVVAADFGQEVADKVRVQYGGSVKPENVKDYMACPDVDGALVGGASLEADSFLALLDFLN</sequence>
<protein>
    <recommendedName>
        <fullName evidence="1">Triosephosphate isomerase</fullName>
        <shortName evidence="1">TIM</shortName>
        <shortName evidence="1">TPI</shortName>
        <ecNumber evidence="1">5.3.1.1</ecNumber>
    </recommendedName>
    <alternativeName>
        <fullName evidence="1">Triose-phosphate isomerase</fullName>
    </alternativeName>
</protein>
<accession>Q1JCT5</accession>